<comment type="function">
    <text evidence="1">Necessary for normal cell division and for the maintenance of normal septation.</text>
</comment>
<comment type="cofactor">
    <cofactor evidence="1">
        <name>Mg(2+)</name>
        <dbReference type="ChEBI" id="CHEBI:18420"/>
    </cofactor>
</comment>
<comment type="similarity">
    <text evidence="1">Belongs to the TRAFAC class TrmE-Era-EngA-EngB-Septin-like GTPase superfamily. EngB GTPase family.</text>
</comment>
<keyword id="KW-0131">Cell cycle</keyword>
<keyword id="KW-0132">Cell division</keyword>
<keyword id="KW-0342">GTP-binding</keyword>
<keyword id="KW-0460">Magnesium</keyword>
<keyword id="KW-0479">Metal-binding</keyword>
<keyword id="KW-0547">Nucleotide-binding</keyword>
<keyword id="KW-1185">Reference proteome</keyword>
<keyword id="KW-0717">Septation</keyword>
<dbReference type="EMBL" id="U00089">
    <property type="protein sequence ID" value="AAB96008.1"/>
    <property type="molecule type" value="Genomic_DNA"/>
</dbReference>
<dbReference type="PIR" id="S73686">
    <property type="entry name" value="S73686"/>
</dbReference>
<dbReference type="RefSeq" id="NP_110169.1">
    <property type="nucleotide sequence ID" value="NC_000912.1"/>
</dbReference>
<dbReference type="SMR" id="P75303"/>
<dbReference type="STRING" id="272634.MPN_481"/>
<dbReference type="EnsemblBacteria" id="AAB96008">
    <property type="protein sequence ID" value="AAB96008"/>
    <property type="gene ID" value="MPN_481"/>
</dbReference>
<dbReference type="KEGG" id="mpn:MPN_481"/>
<dbReference type="PATRIC" id="fig|272634.6.peg.520"/>
<dbReference type="HOGENOM" id="CLU_033732_3_2_14"/>
<dbReference type="OrthoDB" id="9804921at2"/>
<dbReference type="BioCyc" id="MPNE272634:G1GJ3-787-MONOMER"/>
<dbReference type="Proteomes" id="UP000000808">
    <property type="component" value="Chromosome"/>
</dbReference>
<dbReference type="GO" id="GO:0005829">
    <property type="term" value="C:cytosol"/>
    <property type="evidence" value="ECO:0007669"/>
    <property type="project" value="TreeGrafter"/>
</dbReference>
<dbReference type="GO" id="GO:0005525">
    <property type="term" value="F:GTP binding"/>
    <property type="evidence" value="ECO:0007669"/>
    <property type="project" value="UniProtKB-UniRule"/>
</dbReference>
<dbReference type="GO" id="GO:0046872">
    <property type="term" value="F:metal ion binding"/>
    <property type="evidence" value="ECO:0007669"/>
    <property type="project" value="UniProtKB-KW"/>
</dbReference>
<dbReference type="GO" id="GO:0000917">
    <property type="term" value="P:division septum assembly"/>
    <property type="evidence" value="ECO:0007669"/>
    <property type="project" value="UniProtKB-KW"/>
</dbReference>
<dbReference type="CDD" id="cd01876">
    <property type="entry name" value="YihA_EngB"/>
    <property type="match status" value="1"/>
</dbReference>
<dbReference type="Gene3D" id="3.40.50.300">
    <property type="entry name" value="P-loop containing nucleotide triphosphate hydrolases"/>
    <property type="match status" value="1"/>
</dbReference>
<dbReference type="HAMAP" id="MF_00321">
    <property type="entry name" value="GTPase_EngB"/>
    <property type="match status" value="1"/>
</dbReference>
<dbReference type="InterPro" id="IPR030393">
    <property type="entry name" value="G_ENGB_dom"/>
</dbReference>
<dbReference type="InterPro" id="IPR006073">
    <property type="entry name" value="GTP-bd"/>
</dbReference>
<dbReference type="InterPro" id="IPR019987">
    <property type="entry name" value="GTP-bd_ribosome_bio_YsxC"/>
</dbReference>
<dbReference type="InterPro" id="IPR027417">
    <property type="entry name" value="P-loop_NTPase"/>
</dbReference>
<dbReference type="InterPro" id="IPR005225">
    <property type="entry name" value="Small_GTP-bd"/>
</dbReference>
<dbReference type="NCBIfam" id="TIGR03598">
    <property type="entry name" value="GTPase_YsxC"/>
    <property type="match status" value="1"/>
</dbReference>
<dbReference type="NCBIfam" id="TIGR00231">
    <property type="entry name" value="small_GTP"/>
    <property type="match status" value="1"/>
</dbReference>
<dbReference type="PANTHER" id="PTHR11649:SF13">
    <property type="entry name" value="ENGB-TYPE G DOMAIN-CONTAINING PROTEIN"/>
    <property type="match status" value="1"/>
</dbReference>
<dbReference type="PANTHER" id="PTHR11649">
    <property type="entry name" value="MSS1/TRME-RELATED GTP-BINDING PROTEIN"/>
    <property type="match status" value="1"/>
</dbReference>
<dbReference type="Pfam" id="PF01926">
    <property type="entry name" value="MMR_HSR1"/>
    <property type="match status" value="1"/>
</dbReference>
<dbReference type="SUPFAM" id="SSF52540">
    <property type="entry name" value="P-loop containing nucleoside triphosphate hydrolases"/>
    <property type="match status" value="1"/>
</dbReference>
<dbReference type="PROSITE" id="PS51706">
    <property type="entry name" value="G_ENGB"/>
    <property type="match status" value="1"/>
</dbReference>
<name>ENGB_MYCPN</name>
<sequence length="193" mass="21818">MEARFLKSASDLESCPQDSVKEVCFMGRSNVGKSSLINAFFQKKLAKTSATPGRTQLLNFFEYNRKRFVDLPGYGFAKLSKVQKEAITNLLTQFLNFRQNLTGVVLVIDSGVVTVQDQEVVKTILQTGLNFLVIANKFDKLNQSERFHTQNKLAHFLKVNPNKCLFVSAKTGYNLQVMHKQIFELFKADGQAI</sequence>
<organism>
    <name type="scientific">Mycoplasma pneumoniae (strain ATCC 29342 / M129 / Subtype 1)</name>
    <name type="common">Mycoplasmoides pneumoniae</name>
    <dbReference type="NCBI Taxonomy" id="272634"/>
    <lineage>
        <taxon>Bacteria</taxon>
        <taxon>Bacillati</taxon>
        <taxon>Mycoplasmatota</taxon>
        <taxon>Mycoplasmoidales</taxon>
        <taxon>Mycoplasmoidaceae</taxon>
        <taxon>Mycoplasmoides</taxon>
    </lineage>
</organism>
<accession>P75303</accession>
<evidence type="ECO:0000255" key="1">
    <source>
        <dbReference type="HAMAP-Rule" id="MF_00321"/>
    </source>
</evidence>
<proteinExistence type="inferred from homology"/>
<protein>
    <recommendedName>
        <fullName evidence="1">Probable GTP-binding protein EngB</fullName>
    </recommendedName>
</protein>
<feature type="chain" id="PRO_0000157764" description="Probable GTP-binding protein EngB">
    <location>
        <begin position="1"/>
        <end position="193"/>
    </location>
</feature>
<feature type="domain" description="EngB-type G" evidence="1">
    <location>
        <begin position="19"/>
        <end position="188"/>
    </location>
</feature>
<feature type="binding site" evidence="1">
    <location>
        <begin position="27"/>
        <end position="34"/>
    </location>
    <ligand>
        <name>GTP</name>
        <dbReference type="ChEBI" id="CHEBI:37565"/>
    </ligand>
</feature>
<feature type="binding site" evidence="1">
    <location>
        <position position="34"/>
    </location>
    <ligand>
        <name>Mg(2+)</name>
        <dbReference type="ChEBI" id="CHEBI:18420"/>
    </ligand>
</feature>
<feature type="binding site" evidence="1">
    <location>
        <begin position="53"/>
        <end position="57"/>
    </location>
    <ligand>
        <name>GTP</name>
        <dbReference type="ChEBI" id="CHEBI:37565"/>
    </ligand>
</feature>
<feature type="binding site" evidence="1">
    <location>
        <position position="55"/>
    </location>
    <ligand>
        <name>Mg(2+)</name>
        <dbReference type="ChEBI" id="CHEBI:18420"/>
    </ligand>
</feature>
<feature type="binding site" evidence="1">
    <location>
        <begin position="70"/>
        <end position="73"/>
    </location>
    <ligand>
        <name>GTP</name>
        <dbReference type="ChEBI" id="CHEBI:37565"/>
    </ligand>
</feature>
<feature type="binding site" evidence="1">
    <location>
        <begin position="136"/>
        <end position="139"/>
    </location>
    <ligand>
        <name>GTP</name>
        <dbReference type="ChEBI" id="CHEBI:37565"/>
    </ligand>
</feature>
<feature type="binding site" evidence="1">
    <location>
        <begin position="167"/>
        <end position="169"/>
    </location>
    <ligand>
        <name>GTP</name>
        <dbReference type="ChEBI" id="CHEBI:37565"/>
    </ligand>
</feature>
<reference key="1">
    <citation type="journal article" date="1996" name="Nucleic Acids Res.">
        <title>Complete sequence analysis of the genome of the bacterium Mycoplasma pneumoniae.</title>
        <authorList>
            <person name="Himmelreich R."/>
            <person name="Hilbert H."/>
            <person name="Plagens H."/>
            <person name="Pirkl E."/>
            <person name="Li B.-C."/>
            <person name="Herrmann R."/>
        </authorList>
    </citation>
    <scope>NUCLEOTIDE SEQUENCE [LARGE SCALE GENOMIC DNA]</scope>
    <source>
        <strain>ATCC 29342 / M129 / Subtype 1</strain>
    </source>
</reference>
<gene>
    <name evidence="1" type="primary">engB</name>
    <name type="ordered locus">MPN_481</name>
    <name type="ORF">MP360</name>
</gene>